<evidence type="ECO:0000250" key="1">
    <source>
        <dbReference type="UniProtKB" id="Q2XPP4"/>
    </source>
</evidence>
<evidence type="ECO:0000250" key="2">
    <source>
        <dbReference type="UniProtKB" id="Q8BGE6"/>
    </source>
</evidence>
<evidence type="ECO:0000250" key="3">
    <source>
        <dbReference type="UniProtKB" id="Q9Y4P1"/>
    </source>
</evidence>
<evidence type="ECO:0000305" key="4"/>
<feature type="chain" id="PRO_0000286900" description="Cysteine protease ATG4">
    <location>
        <begin position="1"/>
        <end position="487"/>
    </location>
</feature>
<feature type="active site" description="Nucleophile" evidence="3">
    <location>
        <position position="174"/>
    </location>
</feature>
<feature type="active site" evidence="3">
    <location>
        <position position="369"/>
    </location>
</feature>
<feature type="active site" evidence="3">
    <location>
        <position position="371"/>
    </location>
</feature>
<sequence length="487" mass="53809">MVLKDLCDRIVAAKCSSKSSTEIVDNTQVPASSKAGSSDSKFPKASLWSTFFTSGFSVDETYSESSSSEKKTVHSRNSGWAAAVRKVVSGGSMRRFQERVLGSCRTDVSSSDGDIWLLGVCHKISQHESTGDVDIRNVFAAFEQDFFSRILITYRKGFDAIEDSKYTSDVNWGCMLRSSQMLVAQALLFHKLGRSWRKTVDKPVDKEYIDILQLFGDSEAAAFSIHNLLQAGKGYGLAVGSWVGPYAMCRTWEVLARNQREKNEQGEQLLPMAIYVVSGDEDGERGGAPVVCIEDACKRCLEFSRGLVPWTPLLLLVPLVLGLDKVNLRYIPLLQSTFKFPQSLGILGGKPGASTYIIGVQNDKAFYLDPHEVKPVVNITGDTQEPNTSSYHCNISRHMPLDSIDPSLAIGFYCRDKDDFDDFCSRATKLAEESNGAPLFTVAQSRSLPMQVTSNSVSGDDTRFEEDDSLSMNLVNDAGNEDDWQFL</sequence>
<comment type="function">
    <text evidence="1 3">Cysteine protease that plays a key role in autophagy by mediating both proteolytic activation and delipidation of ATG8 family proteins. The protease activity is required for proteolytic activation of ATG8 family proteins: cleaves the C-terminal amino acid of ATG8 proteins to reveal a C-terminal glycine (By similarity). Exposure of the glycine at the C-terminus is essential for ATG8 proteins conjugation to phosphatidylethanolamine (PE) and insertion to membranes, which is necessary for autophagy. In addition to the protease activity, also mediates delipidation of PE-conjugated ATG8 proteins (By similarity).</text>
</comment>
<comment type="catalytic activity">
    <reaction evidence="3">
        <text>[protein]-C-terminal L-amino acid-glycyl-phosphatidylethanolamide + H2O = [protein]-C-terminal L-amino acid-glycine + a 1,2-diacyl-sn-glycero-3-phosphoethanolamine</text>
        <dbReference type="Rhea" id="RHEA:67548"/>
        <dbReference type="Rhea" id="RHEA-COMP:17323"/>
        <dbReference type="Rhea" id="RHEA-COMP:17324"/>
        <dbReference type="ChEBI" id="CHEBI:15377"/>
        <dbReference type="ChEBI" id="CHEBI:64612"/>
        <dbReference type="ChEBI" id="CHEBI:172940"/>
        <dbReference type="ChEBI" id="CHEBI:172941"/>
    </reaction>
    <physiologicalReaction direction="left-to-right" evidence="3">
        <dbReference type="Rhea" id="RHEA:67549"/>
    </physiologicalReaction>
</comment>
<comment type="subunit">
    <text evidence="3">Interacts with ATG8.</text>
</comment>
<comment type="subcellular location">
    <subcellularLocation>
        <location evidence="2">Cytoplasm</location>
    </subcellularLocation>
</comment>
<comment type="similarity">
    <text evidence="4">Belongs to the peptidase C54 family.</text>
</comment>
<gene>
    <name type="primary">ATG4</name>
    <name type="synonym">APG4</name>
    <name type="ORF">MtrDRAFT_AC149129g15v2</name>
</gene>
<organism>
    <name type="scientific">Medicago truncatula</name>
    <name type="common">Barrel medic</name>
    <name type="synonym">Medicago tribuloides</name>
    <dbReference type="NCBI Taxonomy" id="3880"/>
    <lineage>
        <taxon>Eukaryota</taxon>
        <taxon>Viridiplantae</taxon>
        <taxon>Streptophyta</taxon>
        <taxon>Embryophyta</taxon>
        <taxon>Tracheophyta</taxon>
        <taxon>Spermatophyta</taxon>
        <taxon>Magnoliopsida</taxon>
        <taxon>eudicotyledons</taxon>
        <taxon>Gunneridae</taxon>
        <taxon>Pentapetalae</taxon>
        <taxon>rosids</taxon>
        <taxon>fabids</taxon>
        <taxon>Fabales</taxon>
        <taxon>Fabaceae</taxon>
        <taxon>Papilionoideae</taxon>
        <taxon>50 kb inversion clade</taxon>
        <taxon>NPAAA clade</taxon>
        <taxon>Hologalegina</taxon>
        <taxon>IRL clade</taxon>
        <taxon>Trifolieae</taxon>
        <taxon>Medicago</taxon>
    </lineage>
</organism>
<keyword id="KW-0072">Autophagy</keyword>
<keyword id="KW-0963">Cytoplasm</keyword>
<keyword id="KW-0378">Hydrolase</keyword>
<keyword id="KW-0645">Protease</keyword>
<keyword id="KW-0653">Protein transport</keyword>
<keyword id="KW-0788">Thiol protease</keyword>
<keyword id="KW-0813">Transport</keyword>
<keyword id="KW-0833">Ubl conjugation pathway</keyword>
<protein>
    <recommendedName>
        <fullName evidence="4">Cysteine protease ATG4</fullName>
        <ecNumber evidence="3">3.4.22.-</ecNumber>
    </recommendedName>
    <alternativeName>
        <fullName>Autophagy-related protein 4</fullName>
    </alternativeName>
</protein>
<dbReference type="EC" id="3.4.22.-" evidence="3"/>
<dbReference type="EMBL" id="AC149129">
    <property type="protein sequence ID" value="ABN05923.1"/>
    <property type="molecule type" value="Genomic_DNA"/>
</dbReference>
<dbReference type="RefSeq" id="XP_003624282.1">
    <property type="nucleotide sequence ID" value="XM_003624234.2"/>
</dbReference>
<dbReference type="SMR" id="A2Q1V6"/>
<dbReference type="PaxDb" id="3880-AES80500"/>
<dbReference type="GeneID" id="11436743"/>
<dbReference type="KEGG" id="mtr:11436743"/>
<dbReference type="eggNOG" id="KOG2674">
    <property type="taxonomic scope" value="Eukaryota"/>
</dbReference>
<dbReference type="OMA" id="TGFGCMI"/>
<dbReference type="OrthoDB" id="2960936at2759"/>
<dbReference type="GO" id="GO:0005737">
    <property type="term" value="C:cytoplasm"/>
    <property type="evidence" value="ECO:0007669"/>
    <property type="project" value="UniProtKB-SubCell"/>
</dbReference>
<dbReference type="GO" id="GO:0008234">
    <property type="term" value="F:cysteine-type peptidase activity"/>
    <property type="evidence" value="ECO:0007669"/>
    <property type="project" value="UniProtKB-KW"/>
</dbReference>
<dbReference type="GO" id="GO:0019786">
    <property type="term" value="F:protein-phosphatidylethanolamide deconjugating activity"/>
    <property type="evidence" value="ECO:0007669"/>
    <property type="project" value="InterPro"/>
</dbReference>
<dbReference type="GO" id="GO:0006914">
    <property type="term" value="P:autophagy"/>
    <property type="evidence" value="ECO:0007669"/>
    <property type="project" value="UniProtKB-KW"/>
</dbReference>
<dbReference type="GO" id="GO:0015031">
    <property type="term" value="P:protein transport"/>
    <property type="evidence" value="ECO:0007669"/>
    <property type="project" value="UniProtKB-KW"/>
</dbReference>
<dbReference type="GO" id="GO:0006508">
    <property type="term" value="P:proteolysis"/>
    <property type="evidence" value="ECO:0007669"/>
    <property type="project" value="UniProtKB-KW"/>
</dbReference>
<dbReference type="InterPro" id="IPR038765">
    <property type="entry name" value="Papain-like_cys_pep_sf"/>
</dbReference>
<dbReference type="InterPro" id="IPR005078">
    <property type="entry name" value="Peptidase_C54"/>
</dbReference>
<dbReference type="InterPro" id="IPR046792">
    <property type="entry name" value="Peptidase_C54_cat"/>
</dbReference>
<dbReference type="PANTHER" id="PTHR22624:SF49">
    <property type="entry name" value="CYSTEINE PROTEASE"/>
    <property type="match status" value="1"/>
</dbReference>
<dbReference type="PANTHER" id="PTHR22624">
    <property type="entry name" value="CYSTEINE PROTEASE ATG4"/>
    <property type="match status" value="1"/>
</dbReference>
<dbReference type="Pfam" id="PF03416">
    <property type="entry name" value="Peptidase_C54"/>
    <property type="match status" value="1"/>
</dbReference>
<dbReference type="SUPFAM" id="SSF54001">
    <property type="entry name" value="Cysteine proteinases"/>
    <property type="match status" value="1"/>
</dbReference>
<reference key="1">
    <citation type="submission" date="2007-02" db="EMBL/GenBank/DDBJ databases">
        <authorList>
            <consortium name="The international Medicago genome annotation group"/>
        </authorList>
    </citation>
    <scope>NUCLEOTIDE SEQUENCE [LARGE SCALE GENOMIC DNA]</scope>
</reference>
<name>ATG4_MEDTR</name>
<proteinExistence type="inferred from homology"/>
<accession>A2Q1V6</accession>